<proteinExistence type="inferred from homology"/>
<feature type="chain" id="PRO_0000111426" description="Small ribosomal subunit protein uS9">
    <location>
        <begin position="1"/>
        <end position="137"/>
    </location>
</feature>
<feature type="region of interest" description="Disordered" evidence="2">
    <location>
        <begin position="106"/>
        <end position="137"/>
    </location>
</feature>
<feature type="compositionally biased region" description="Basic and acidic residues" evidence="2">
    <location>
        <begin position="106"/>
        <end position="117"/>
    </location>
</feature>
<feature type="compositionally biased region" description="Basic residues" evidence="2">
    <location>
        <begin position="118"/>
        <end position="137"/>
    </location>
</feature>
<gene>
    <name evidence="1" type="primary">rpsI</name>
    <name evidence="1" type="synonym">rps9</name>
    <name type="ordered locus">tlr0109</name>
</gene>
<comment type="similarity">
    <text evidence="1">Belongs to the universal ribosomal protein uS9 family.</text>
</comment>
<dbReference type="EMBL" id="BA000039">
    <property type="protein sequence ID" value="BAC07662.1"/>
    <property type="molecule type" value="Genomic_DNA"/>
</dbReference>
<dbReference type="RefSeq" id="NP_680900.1">
    <property type="nucleotide sequence ID" value="NC_004113.1"/>
</dbReference>
<dbReference type="RefSeq" id="WP_011055964.1">
    <property type="nucleotide sequence ID" value="NC_004113.1"/>
</dbReference>
<dbReference type="SMR" id="Q8DMK7"/>
<dbReference type="STRING" id="197221.gene:10746687"/>
<dbReference type="EnsemblBacteria" id="BAC07662">
    <property type="protein sequence ID" value="BAC07662"/>
    <property type="gene ID" value="BAC07662"/>
</dbReference>
<dbReference type="KEGG" id="tel:tlr0109"/>
<dbReference type="PATRIC" id="fig|197221.4.peg.112"/>
<dbReference type="eggNOG" id="COG0103">
    <property type="taxonomic scope" value="Bacteria"/>
</dbReference>
<dbReference type="Proteomes" id="UP000000440">
    <property type="component" value="Chromosome"/>
</dbReference>
<dbReference type="GO" id="GO:0022627">
    <property type="term" value="C:cytosolic small ribosomal subunit"/>
    <property type="evidence" value="ECO:0007669"/>
    <property type="project" value="TreeGrafter"/>
</dbReference>
<dbReference type="GO" id="GO:0003723">
    <property type="term" value="F:RNA binding"/>
    <property type="evidence" value="ECO:0007669"/>
    <property type="project" value="TreeGrafter"/>
</dbReference>
<dbReference type="GO" id="GO:0003735">
    <property type="term" value="F:structural constituent of ribosome"/>
    <property type="evidence" value="ECO:0007669"/>
    <property type="project" value="InterPro"/>
</dbReference>
<dbReference type="GO" id="GO:0006412">
    <property type="term" value="P:translation"/>
    <property type="evidence" value="ECO:0007669"/>
    <property type="project" value="UniProtKB-UniRule"/>
</dbReference>
<dbReference type="FunFam" id="3.30.230.10:FF:000001">
    <property type="entry name" value="30S ribosomal protein S9"/>
    <property type="match status" value="1"/>
</dbReference>
<dbReference type="Gene3D" id="3.30.230.10">
    <property type="match status" value="1"/>
</dbReference>
<dbReference type="HAMAP" id="MF_00532_B">
    <property type="entry name" value="Ribosomal_uS9_B"/>
    <property type="match status" value="1"/>
</dbReference>
<dbReference type="InterPro" id="IPR020568">
    <property type="entry name" value="Ribosomal_Su5_D2-typ_SF"/>
</dbReference>
<dbReference type="InterPro" id="IPR000754">
    <property type="entry name" value="Ribosomal_uS9"/>
</dbReference>
<dbReference type="InterPro" id="IPR023035">
    <property type="entry name" value="Ribosomal_uS9_bac/plastid"/>
</dbReference>
<dbReference type="InterPro" id="IPR020574">
    <property type="entry name" value="Ribosomal_uS9_CS"/>
</dbReference>
<dbReference type="InterPro" id="IPR014721">
    <property type="entry name" value="Ribsml_uS5_D2-typ_fold_subgr"/>
</dbReference>
<dbReference type="NCBIfam" id="NF001099">
    <property type="entry name" value="PRK00132.1"/>
    <property type="match status" value="1"/>
</dbReference>
<dbReference type="PANTHER" id="PTHR21569">
    <property type="entry name" value="RIBOSOMAL PROTEIN S9"/>
    <property type="match status" value="1"/>
</dbReference>
<dbReference type="PANTHER" id="PTHR21569:SF1">
    <property type="entry name" value="SMALL RIBOSOMAL SUBUNIT PROTEIN US9M"/>
    <property type="match status" value="1"/>
</dbReference>
<dbReference type="Pfam" id="PF00380">
    <property type="entry name" value="Ribosomal_S9"/>
    <property type="match status" value="1"/>
</dbReference>
<dbReference type="SUPFAM" id="SSF54211">
    <property type="entry name" value="Ribosomal protein S5 domain 2-like"/>
    <property type="match status" value="1"/>
</dbReference>
<dbReference type="PROSITE" id="PS00360">
    <property type="entry name" value="RIBOSOMAL_S9"/>
    <property type="match status" value="1"/>
</dbReference>
<accession>Q8DMK7</accession>
<reference key="1">
    <citation type="journal article" date="2002" name="DNA Res.">
        <title>Complete genome structure of the thermophilic cyanobacterium Thermosynechococcus elongatus BP-1.</title>
        <authorList>
            <person name="Nakamura Y."/>
            <person name="Kaneko T."/>
            <person name="Sato S."/>
            <person name="Ikeuchi M."/>
            <person name="Katoh H."/>
            <person name="Sasamoto S."/>
            <person name="Watanabe A."/>
            <person name="Iriguchi M."/>
            <person name="Kawashima K."/>
            <person name="Kimura T."/>
            <person name="Kishida Y."/>
            <person name="Kiyokawa C."/>
            <person name="Kohara M."/>
            <person name="Matsumoto M."/>
            <person name="Matsuno A."/>
            <person name="Nakazaki N."/>
            <person name="Shimpo S."/>
            <person name="Sugimoto M."/>
            <person name="Takeuchi C."/>
            <person name="Yamada M."/>
            <person name="Tabata S."/>
        </authorList>
    </citation>
    <scope>NUCLEOTIDE SEQUENCE [LARGE SCALE GENOMIC DNA]</scope>
    <source>
        <strain>NIES-2133 / IAM M-273 / BP-1</strain>
    </source>
</reference>
<organism>
    <name type="scientific">Thermosynechococcus vestitus (strain NIES-2133 / IAM M-273 / BP-1)</name>
    <dbReference type="NCBI Taxonomy" id="197221"/>
    <lineage>
        <taxon>Bacteria</taxon>
        <taxon>Bacillati</taxon>
        <taxon>Cyanobacteriota</taxon>
        <taxon>Cyanophyceae</taxon>
        <taxon>Acaryochloridales</taxon>
        <taxon>Thermosynechococcaceae</taxon>
        <taxon>Thermosynechococcus</taxon>
    </lineage>
</organism>
<evidence type="ECO:0000255" key="1">
    <source>
        <dbReference type="HAMAP-Rule" id="MF_00532"/>
    </source>
</evidence>
<evidence type="ECO:0000256" key="2">
    <source>
        <dbReference type="SAM" id="MobiDB-lite"/>
    </source>
</evidence>
<evidence type="ECO:0000305" key="3"/>
<sequence length="137" mass="15329">MQIADQSKRVVYLGTGRRKSAVARVRLIPGSGQLWINGRNGADYLQNNPIYLNLVKAPLETLGLENSYDIYVNATGGGLTGQADAIRLGIARALCQLDIENRKPLKTEGYLTRDPRAKERRKYGLRKARKAPQYSKR</sequence>
<protein>
    <recommendedName>
        <fullName evidence="1">Small ribosomal subunit protein uS9</fullName>
    </recommendedName>
    <alternativeName>
        <fullName evidence="3">30S ribosomal protein S9</fullName>
    </alternativeName>
</protein>
<name>RS9_THEVB</name>
<keyword id="KW-1185">Reference proteome</keyword>
<keyword id="KW-0687">Ribonucleoprotein</keyword>
<keyword id="KW-0689">Ribosomal protein</keyword>